<dbReference type="EC" id="2.1.1.-" evidence="1"/>
<dbReference type="EC" id="2.1.1.35" evidence="1"/>
<dbReference type="EMBL" id="BX571662">
    <property type="protein sequence ID" value="CAE11092.1"/>
    <property type="molecule type" value="Genomic_DNA"/>
</dbReference>
<dbReference type="RefSeq" id="WP_011139874.1">
    <property type="nucleotide sequence ID" value="NC_005090.1"/>
</dbReference>
<dbReference type="SMR" id="Q7M7T6"/>
<dbReference type="STRING" id="273121.WS2094"/>
<dbReference type="KEGG" id="wsu:WS2094"/>
<dbReference type="eggNOG" id="COG2265">
    <property type="taxonomic scope" value="Bacteria"/>
</dbReference>
<dbReference type="HOGENOM" id="CLU_043022_0_0_7"/>
<dbReference type="Proteomes" id="UP000000422">
    <property type="component" value="Chromosome"/>
</dbReference>
<dbReference type="GO" id="GO:0005829">
    <property type="term" value="C:cytosol"/>
    <property type="evidence" value="ECO:0007669"/>
    <property type="project" value="TreeGrafter"/>
</dbReference>
<dbReference type="GO" id="GO:0019843">
    <property type="term" value="F:rRNA binding"/>
    <property type="evidence" value="ECO:0007669"/>
    <property type="project" value="TreeGrafter"/>
</dbReference>
<dbReference type="GO" id="GO:0030697">
    <property type="term" value="F:tRNA (uracil(54)-C5)-methyltransferase activity, S-adenosyl methionine-dependent"/>
    <property type="evidence" value="ECO:0007669"/>
    <property type="project" value="UniProtKB-EC"/>
</dbReference>
<dbReference type="GO" id="GO:0000049">
    <property type="term" value="F:tRNA binding"/>
    <property type="evidence" value="ECO:0007669"/>
    <property type="project" value="TreeGrafter"/>
</dbReference>
<dbReference type="GO" id="GO:0032259">
    <property type="term" value="P:methylation"/>
    <property type="evidence" value="ECO:0007669"/>
    <property type="project" value="UniProtKB-KW"/>
</dbReference>
<dbReference type="GO" id="GO:0009451">
    <property type="term" value="P:RNA modification"/>
    <property type="evidence" value="ECO:0007669"/>
    <property type="project" value="UniProtKB-ARBA"/>
</dbReference>
<dbReference type="GO" id="GO:0008033">
    <property type="term" value="P:tRNA processing"/>
    <property type="evidence" value="ECO:0007669"/>
    <property type="project" value="UniProtKB-KW"/>
</dbReference>
<dbReference type="CDD" id="cd02440">
    <property type="entry name" value="AdoMet_MTases"/>
    <property type="match status" value="1"/>
</dbReference>
<dbReference type="FunFam" id="3.40.50.150:FF:000012">
    <property type="entry name" value="tRNA/tmRNA (uracil-C(5))-methyltransferase"/>
    <property type="match status" value="1"/>
</dbReference>
<dbReference type="Gene3D" id="2.40.50.1070">
    <property type="match status" value="1"/>
</dbReference>
<dbReference type="Gene3D" id="3.40.50.150">
    <property type="entry name" value="Vaccinia Virus protein VP39"/>
    <property type="match status" value="1"/>
</dbReference>
<dbReference type="HAMAP" id="MF_01011">
    <property type="entry name" value="RNA_methyltr_TrmA"/>
    <property type="match status" value="1"/>
</dbReference>
<dbReference type="InterPro" id="IPR030390">
    <property type="entry name" value="MeTrfase_TrmA_AS"/>
</dbReference>
<dbReference type="InterPro" id="IPR030391">
    <property type="entry name" value="MeTrfase_TrmA_CS"/>
</dbReference>
<dbReference type="InterPro" id="IPR029063">
    <property type="entry name" value="SAM-dependent_MTases_sf"/>
</dbReference>
<dbReference type="InterPro" id="IPR011869">
    <property type="entry name" value="TrmA_MeTrfase"/>
</dbReference>
<dbReference type="InterPro" id="IPR010280">
    <property type="entry name" value="U5_MeTrfase_fam"/>
</dbReference>
<dbReference type="NCBIfam" id="TIGR02143">
    <property type="entry name" value="trmA_only"/>
    <property type="match status" value="1"/>
</dbReference>
<dbReference type="PANTHER" id="PTHR47790">
    <property type="entry name" value="TRNA/TMRNA (URACIL-C(5))-METHYLTRANSFERASE"/>
    <property type="match status" value="1"/>
</dbReference>
<dbReference type="PANTHER" id="PTHR47790:SF2">
    <property type="entry name" value="TRNA_TMRNA (URACIL-C(5))-METHYLTRANSFERASE"/>
    <property type="match status" value="1"/>
</dbReference>
<dbReference type="Pfam" id="PF05958">
    <property type="entry name" value="tRNA_U5-meth_tr"/>
    <property type="match status" value="1"/>
</dbReference>
<dbReference type="SUPFAM" id="SSF53335">
    <property type="entry name" value="S-adenosyl-L-methionine-dependent methyltransferases"/>
    <property type="match status" value="1"/>
</dbReference>
<dbReference type="PROSITE" id="PS51687">
    <property type="entry name" value="SAM_MT_RNA_M5U"/>
    <property type="match status" value="1"/>
</dbReference>
<dbReference type="PROSITE" id="PS01230">
    <property type="entry name" value="TRMA_1"/>
    <property type="match status" value="1"/>
</dbReference>
<dbReference type="PROSITE" id="PS01231">
    <property type="entry name" value="TRMA_2"/>
    <property type="match status" value="1"/>
</dbReference>
<protein>
    <recommendedName>
        <fullName evidence="1">tRNA/tmRNA (uracil-C(5))-methyltransferase</fullName>
        <ecNumber evidence="1">2.1.1.-</ecNumber>
        <ecNumber evidence="1">2.1.1.35</ecNumber>
    </recommendedName>
    <alternativeName>
        <fullName evidence="1">tRNA (uracil(54)-C(5))-methyltransferase</fullName>
    </alternativeName>
    <alternativeName>
        <fullName evidence="1">tRNA(m5U54)-methyltransferase</fullName>
        <shortName evidence="1">RUMT</shortName>
    </alternativeName>
    <alternativeName>
        <fullName evidence="1">tmRNA (uracil(341)-C(5))-methyltransferase</fullName>
    </alternativeName>
</protein>
<comment type="function">
    <text evidence="1">Dual-specificity methyltransferase that catalyzes the formation of 5-methyluridine at position 54 (m5U54) in all tRNAs, and that of position 341 (m5U341) in tmRNA (transfer-mRNA).</text>
</comment>
<comment type="catalytic activity">
    <reaction evidence="1">
        <text>uridine(54) in tRNA + S-adenosyl-L-methionine = 5-methyluridine(54) in tRNA + S-adenosyl-L-homocysteine + H(+)</text>
        <dbReference type="Rhea" id="RHEA:42712"/>
        <dbReference type="Rhea" id="RHEA-COMP:10167"/>
        <dbReference type="Rhea" id="RHEA-COMP:10193"/>
        <dbReference type="ChEBI" id="CHEBI:15378"/>
        <dbReference type="ChEBI" id="CHEBI:57856"/>
        <dbReference type="ChEBI" id="CHEBI:59789"/>
        <dbReference type="ChEBI" id="CHEBI:65315"/>
        <dbReference type="ChEBI" id="CHEBI:74447"/>
        <dbReference type="EC" id="2.1.1.35"/>
    </reaction>
</comment>
<comment type="catalytic activity">
    <reaction evidence="1">
        <text>uridine(341) in tmRNA + S-adenosyl-L-methionine = 5-methyluridine(341) in tmRNA + S-adenosyl-L-homocysteine + H(+)</text>
        <dbReference type="Rhea" id="RHEA:43612"/>
        <dbReference type="Rhea" id="RHEA-COMP:10630"/>
        <dbReference type="Rhea" id="RHEA-COMP:10631"/>
        <dbReference type="ChEBI" id="CHEBI:15378"/>
        <dbReference type="ChEBI" id="CHEBI:57856"/>
        <dbReference type="ChEBI" id="CHEBI:59789"/>
        <dbReference type="ChEBI" id="CHEBI:65315"/>
        <dbReference type="ChEBI" id="CHEBI:74447"/>
    </reaction>
</comment>
<comment type="similarity">
    <text evidence="1">Belongs to the class I-like SAM-binding methyltransferase superfamily. RNA M5U methyltransferase family. TrmA subfamily.</text>
</comment>
<accession>Q7M7T6</accession>
<gene>
    <name evidence="1" type="primary">trmA</name>
    <name type="ordered locus">WS2094</name>
</gene>
<sequence>MICPHQGTCGGCALALPYEEQWKLKESEFRELLPLSKDTPTDLYPSAPHSFRARAEFRLYRNESGRLSYAMSQKGSKQPLPIQSCPILLPSIQALMPSLLEALESDEILTQKLFGVEFLSGLSQEVLVSLLYHKRLDHAWEERALGLLSSLPTLSSLIGRSKGQKIVLGESFITETLTIDSKPWRFLHYEGSFTQPNPKVNEKMIEWIISAPPQGDLLELYCGAGNFTLPLSSRYAKILATEVSKTSIHAAKQNCELNSVRHISFVRLNAQETQSALEGEREFYRLRELDLPSYDFQAVFVDPPRAGLGAEVASFLRRFDQILYISCNPKTLQSDLEVLQLSHDVERFALFDQFPYTPHLESGVILRQRR</sequence>
<keyword id="KW-0489">Methyltransferase</keyword>
<keyword id="KW-1185">Reference proteome</keyword>
<keyword id="KW-0949">S-adenosyl-L-methionine</keyword>
<keyword id="KW-0808">Transferase</keyword>
<keyword id="KW-0819">tRNA processing</keyword>
<proteinExistence type="inferred from homology"/>
<organism>
    <name type="scientific">Wolinella succinogenes (strain ATCC 29543 / DSM 1740 / CCUG 13145 / JCM 31913 / LMG 7466 / NCTC 11488 / FDC 602W)</name>
    <name type="common">Vibrio succinogenes</name>
    <dbReference type="NCBI Taxonomy" id="273121"/>
    <lineage>
        <taxon>Bacteria</taxon>
        <taxon>Pseudomonadati</taxon>
        <taxon>Campylobacterota</taxon>
        <taxon>Epsilonproteobacteria</taxon>
        <taxon>Campylobacterales</taxon>
        <taxon>Helicobacteraceae</taxon>
        <taxon>Wolinella</taxon>
    </lineage>
</organism>
<name>TRMA_WOLSU</name>
<reference key="1">
    <citation type="journal article" date="2003" name="Proc. Natl. Acad. Sci. U.S.A.">
        <title>Complete genome sequence and analysis of Wolinella succinogenes.</title>
        <authorList>
            <person name="Baar C."/>
            <person name="Eppinger M."/>
            <person name="Raddatz G."/>
            <person name="Simon J."/>
            <person name="Lanz C."/>
            <person name="Klimmek O."/>
            <person name="Nandakumar R."/>
            <person name="Gross R."/>
            <person name="Rosinus A."/>
            <person name="Keller H."/>
            <person name="Jagtap P."/>
            <person name="Linke B."/>
            <person name="Meyer F."/>
            <person name="Lederer H."/>
            <person name="Schuster S.C."/>
        </authorList>
    </citation>
    <scope>NUCLEOTIDE SEQUENCE [LARGE SCALE GENOMIC DNA]</scope>
    <source>
        <strain>ATCC 29543 / DSM 1740 / CCUG 13145 / JCM 31913 / LMG 7466 / NCTC 11488 / FDC 602W</strain>
    </source>
</reference>
<feature type="chain" id="PRO_0000281472" description="tRNA/tmRNA (uracil-C(5))-methyltransferase">
    <location>
        <begin position="1"/>
        <end position="370"/>
    </location>
</feature>
<feature type="active site" description="Nucleophile" evidence="1">
    <location>
        <position position="327"/>
    </location>
</feature>
<feature type="active site" description="Proton acceptor" evidence="1">
    <location>
        <position position="361"/>
    </location>
</feature>
<feature type="binding site" evidence="1">
    <location>
        <position position="195"/>
    </location>
    <ligand>
        <name>S-adenosyl-L-methionine</name>
        <dbReference type="ChEBI" id="CHEBI:59789"/>
    </ligand>
</feature>
<feature type="binding site" evidence="1">
    <location>
        <position position="221"/>
    </location>
    <ligand>
        <name>S-adenosyl-L-methionine</name>
        <dbReference type="ChEBI" id="CHEBI:59789"/>
    </ligand>
</feature>
<feature type="binding site" evidence="1">
    <location>
        <position position="226"/>
    </location>
    <ligand>
        <name>S-adenosyl-L-methionine</name>
        <dbReference type="ChEBI" id="CHEBI:59789"/>
    </ligand>
</feature>
<feature type="binding site" evidence="1">
    <location>
        <position position="242"/>
    </location>
    <ligand>
        <name>S-adenosyl-L-methionine</name>
        <dbReference type="ChEBI" id="CHEBI:59789"/>
    </ligand>
</feature>
<feature type="binding site" evidence="1">
    <location>
        <position position="302"/>
    </location>
    <ligand>
        <name>S-adenosyl-L-methionine</name>
        <dbReference type="ChEBI" id="CHEBI:59789"/>
    </ligand>
</feature>
<evidence type="ECO:0000255" key="1">
    <source>
        <dbReference type="HAMAP-Rule" id="MF_01011"/>
    </source>
</evidence>